<dbReference type="EMBL" id="AE015929">
    <property type="protein sequence ID" value="AAO05246.1"/>
    <property type="molecule type" value="Genomic_DNA"/>
</dbReference>
<dbReference type="RefSeq" id="NP_765202.1">
    <property type="nucleotide sequence ID" value="NC_004461.1"/>
</dbReference>
<dbReference type="RefSeq" id="WP_001830017.1">
    <property type="nucleotide sequence ID" value="NZ_WBME01000022.1"/>
</dbReference>
<dbReference type="SMR" id="Q8CRQ8"/>
<dbReference type="KEGG" id="sep:SE_1647"/>
<dbReference type="PATRIC" id="fig|176280.10.peg.1611"/>
<dbReference type="eggNOG" id="COG2344">
    <property type="taxonomic scope" value="Bacteria"/>
</dbReference>
<dbReference type="HOGENOM" id="CLU_061534_1_1_9"/>
<dbReference type="OrthoDB" id="9784760at2"/>
<dbReference type="Proteomes" id="UP000001411">
    <property type="component" value="Chromosome"/>
</dbReference>
<dbReference type="GO" id="GO:0005737">
    <property type="term" value="C:cytoplasm"/>
    <property type="evidence" value="ECO:0007669"/>
    <property type="project" value="UniProtKB-SubCell"/>
</dbReference>
<dbReference type="GO" id="GO:0003677">
    <property type="term" value="F:DNA binding"/>
    <property type="evidence" value="ECO:0007669"/>
    <property type="project" value="UniProtKB-UniRule"/>
</dbReference>
<dbReference type="GO" id="GO:0003700">
    <property type="term" value="F:DNA-binding transcription factor activity"/>
    <property type="evidence" value="ECO:0007669"/>
    <property type="project" value="UniProtKB-UniRule"/>
</dbReference>
<dbReference type="GO" id="GO:0045892">
    <property type="term" value="P:negative regulation of DNA-templated transcription"/>
    <property type="evidence" value="ECO:0007669"/>
    <property type="project" value="InterPro"/>
</dbReference>
<dbReference type="GO" id="GO:0051775">
    <property type="term" value="P:response to redox state"/>
    <property type="evidence" value="ECO:0007669"/>
    <property type="project" value="InterPro"/>
</dbReference>
<dbReference type="Gene3D" id="3.40.50.720">
    <property type="entry name" value="NAD(P)-binding Rossmann-like Domain"/>
    <property type="match status" value="1"/>
</dbReference>
<dbReference type="Gene3D" id="1.10.10.10">
    <property type="entry name" value="Winged helix-like DNA-binding domain superfamily/Winged helix DNA-binding domain"/>
    <property type="match status" value="1"/>
</dbReference>
<dbReference type="HAMAP" id="MF_01131">
    <property type="entry name" value="Rex"/>
    <property type="match status" value="1"/>
</dbReference>
<dbReference type="InterPro" id="IPR003781">
    <property type="entry name" value="CoA-bd"/>
</dbReference>
<dbReference type="InterPro" id="IPR036291">
    <property type="entry name" value="NAD(P)-bd_dom_sf"/>
</dbReference>
<dbReference type="InterPro" id="IPR009718">
    <property type="entry name" value="Rex_DNA-bd_C_dom"/>
</dbReference>
<dbReference type="InterPro" id="IPR022876">
    <property type="entry name" value="Tscrpt_rep_Rex"/>
</dbReference>
<dbReference type="InterPro" id="IPR036388">
    <property type="entry name" value="WH-like_DNA-bd_sf"/>
</dbReference>
<dbReference type="InterPro" id="IPR036390">
    <property type="entry name" value="WH_DNA-bd_sf"/>
</dbReference>
<dbReference type="NCBIfam" id="NF003989">
    <property type="entry name" value="PRK05472.1-3"/>
    <property type="match status" value="1"/>
</dbReference>
<dbReference type="NCBIfam" id="NF003991">
    <property type="entry name" value="PRK05472.1-5"/>
    <property type="match status" value="1"/>
</dbReference>
<dbReference type="NCBIfam" id="NF003994">
    <property type="entry name" value="PRK05472.2-3"/>
    <property type="match status" value="1"/>
</dbReference>
<dbReference type="NCBIfam" id="NF003995">
    <property type="entry name" value="PRK05472.2-4"/>
    <property type="match status" value="1"/>
</dbReference>
<dbReference type="NCBIfam" id="NF003996">
    <property type="entry name" value="PRK05472.2-5"/>
    <property type="match status" value="1"/>
</dbReference>
<dbReference type="PANTHER" id="PTHR35786">
    <property type="entry name" value="REDOX-SENSING TRANSCRIPTIONAL REPRESSOR REX"/>
    <property type="match status" value="1"/>
</dbReference>
<dbReference type="PANTHER" id="PTHR35786:SF1">
    <property type="entry name" value="REDOX-SENSING TRANSCRIPTIONAL REPRESSOR REX 1"/>
    <property type="match status" value="1"/>
</dbReference>
<dbReference type="Pfam" id="PF02629">
    <property type="entry name" value="CoA_binding"/>
    <property type="match status" value="1"/>
</dbReference>
<dbReference type="Pfam" id="PF06971">
    <property type="entry name" value="Put_DNA-bind_N"/>
    <property type="match status" value="1"/>
</dbReference>
<dbReference type="SMART" id="SM00881">
    <property type="entry name" value="CoA_binding"/>
    <property type="match status" value="1"/>
</dbReference>
<dbReference type="SUPFAM" id="SSF51735">
    <property type="entry name" value="NAD(P)-binding Rossmann-fold domains"/>
    <property type="match status" value="1"/>
</dbReference>
<dbReference type="SUPFAM" id="SSF46785">
    <property type="entry name" value="Winged helix' DNA-binding domain"/>
    <property type="match status" value="1"/>
</dbReference>
<comment type="function">
    <text evidence="1">Modulates transcription in response to changes in cellular NADH/NAD(+) redox state.</text>
</comment>
<comment type="subunit">
    <text evidence="1">Homodimer.</text>
</comment>
<comment type="subcellular location">
    <subcellularLocation>
        <location evidence="1">Cytoplasm</location>
    </subcellularLocation>
</comment>
<comment type="similarity">
    <text evidence="1">Belongs to the transcriptional regulatory Rex family.</text>
</comment>
<proteinExistence type="inferred from homology"/>
<accession>Q8CRQ8</accession>
<feature type="chain" id="PRO_0000097909" description="Redox-sensing transcriptional repressor Rex">
    <location>
        <begin position="1"/>
        <end position="211"/>
    </location>
</feature>
<feature type="DNA-binding region" description="H-T-H motif" evidence="1">
    <location>
        <begin position="17"/>
        <end position="56"/>
    </location>
</feature>
<feature type="binding site" evidence="1">
    <location>
        <begin position="91"/>
        <end position="96"/>
    </location>
    <ligand>
        <name>NAD(+)</name>
        <dbReference type="ChEBI" id="CHEBI:57540"/>
    </ligand>
</feature>
<gene>
    <name evidence="1" type="primary">rex</name>
    <name type="ordered locus">SE_1647</name>
</gene>
<sequence>MPDDFKIPRATLKRLPLYYRLVSILKGKGIDRVNSKTISEALQIDSATIRRDFSYFGELGKKGYGYNIDSMLEFFKSELSESDQIKIAIIGIGNLGRALLTYNFSIHDEMTITEAFDIRPDIIGENIGDVVVKHSDDIKTTLESEDIDVVILTTPDNVAQQVADELVKAGVKGILNFTPRRIKTPQDVQVHHIDFGIELQSLLFFMKNYSK</sequence>
<keyword id="KW-0963">Cytoplasm</keyword>
<keyword id="KW-0238">DNA-binding</keyword>
<keyword id="KW-0520">NAD</keyword>
<keyword id="KW-0678">Repressor</keyword>
<keyword id="KW-0804">Transcription</keyword>
<keyword id="KW-0805">Transcription regulation</keyword>
<evidence type="ECO:0000255" key="1">
    <source>
        <dbReference type="HAMAP-Rule" id="MF_01131"/>
    </source>
</evidence>
<protein>
    <recommendedName>
        <fullName evidence="1">Redox-sensing transcriptional repressor Rex</fullName>
    </recommendedName>
</protein>
<organism>
    <name type="scientific">Staphylococcus epidermidis (strain ATCC 12228 / FDA PCI 1200)</name>
    <dbReference type="NCBI Taxonomy" id="176280"/>
    <lineage>
        <taxon>Bacteria</taxon>
        <taxon>Bacillati</taxon>
        <taxon>Bacillota</taxon>
        <taxon>Bacilli</taxon>
        <taxon>Bacillales</taxon>
        <taxon>Staphylococcaceae</taxon>
        <taxon>Staphylococcus</taxon>
    </lineage>
</organism>
<name>REX_STAES</name>
<reference key="1">
    <citation type="journal article" date="2003" name="Mol. Microbiol.">
        <title>Genome-based analysis of virulence genes in a non-biofilm-forming Staphylococcus epidermidis strain (ATCC 12228).</title>
        <authorList>
            <person name="Zhang Y.-Q."/>
            <person name="Ren S.-X."/>
            <person name="Li H.-L."/>
            <person name="Wang Y.-X."/>
            <person name="Fu G."/>
            <person name="Yang J."/>
            <person name="Qin Z.-Q."/>
            <person name="Miao Y.-G."/>
            <person name="Wang W.-Y."/>
            <person name="Chen R.-S."/>
            <person name="Shen Y."/>
            <person name="Chen Z."/>
            <person name="Yuan Z.-H."/>
            <person name="Zhao G.-P."/>
            <person name="Qu D."/>
            <person name="Danchin A."/>
            <person name="Wen Y.-M."/>
        </authorList>
    </citation>
    <scope>NUCLEOTIDE SEQUENCE [LARGE SCALE GENOMIC DNA]</scope>
    <source>
        <strain>ATCC 12228 / FDA PCI 1200</strain>
    </source>
</reference>